<protein>
    <recommendedName>
        <fullName>Palustrin-1d</fullName>
    </recommendedName>
</protein>
<dbReference type="GO" id="GO:0005576">
    <property type="term" value="C:extracellular region"/>
    <property type="evidence" value="ECO:0000314"/>
    <property type="project" value="UniProtKB"/>
</dbReference>
<dbReference type="GO" id="GO:0050829">
    <property type="term" value="P:defense response to Gram-negative bacterium"/>
    <property type="evidence" value="ECO:0000314"/>
    <property type="project" value="UniProtKB"/>
</dbReference>
<dbReference type="InterPro" id="IPR012521">
    <property type="entry name" value="Antimicrobial_frog_2"/>
</dbReference>
<dbReference type="Pfam" id="PF08023">
    <property type="entry name" value="Antimicrobial_2"/>
    <property type="match status" value="1"/>
</dbReference>
<comment type="function">
    <text evidence="2">Antimicrobial activity against Gram-negative bacterium E.coli.</text>
</comment>
<comment type="subcellular location">
    <subcellularLocation>
        <location evidence="2">Secreted</location>
    </subcellularLocation>
</comment>
<comment type="tissue specificity">
    <text evidence="2">Expressed by the skin glands.</text>
</comment>
<comment type="mass spectrometry"/>
<comment type="similarity">
    <text evidence="2">Belongs to the frog skin active peptide (FSAP) family. Brevinin subfamily.</text>
</comment>
<reference evidence="3" key="1">
    <citation type="journal article" date="2000" name="Biochim. Biophys. Acta">
        <title>Multiple antimicrobial peptides and peptides related to bradykinin and neuromedin N isolated from skin secretions of the pickerel frog, Rana palustris.</title>
        <authorList>
            <person name="Basir Y.J."/>
            <person name="Knoop F.C."/>
            <person name="Dulka J."/>
            <person name="Conlon J.M."/>
        </authorList>
    </citation>
    <scope>PROTEIN SEQUENCE</scope>
    <scope>FUNCTION</scope>
    <scope>SUBCELLULAR LOCATION</scope>
    <scope>TISSUE SPECIFICITY</scope>
    <scope>MASS SPECTROMETRY</scope>
    <source>
        <tissue evidence="2">Skin secretion</tissue>
    </source>
</reference>
<sequence>ALSILKGLEKLAKMGIALTNCKATKKC</sequence>
<keyword id="KW-0878">Amphibian defense peptide</keyword>
<keyword id="KW-0044">Antibiotic</keyword>
<keyword id="KW-0929">Antimicrobial</keyword>
<keyword id="KW-0903">Direct protein sequencing</keyword>
<keyword id="KW-1015">Disulfide bond</keyword>
<keyword id="KW-0964">Secreted</keyword>
<name>PA1D_LITPA</name>
<evidence type="ECO:0000250" key="1">
    <source>
        <dbReference type="UniProtKB" id="P82875"/>
    </source>
</evidence>
<evidence type="ECO:0000269" key="2">
    <source>
    </source>
</evidence>
<evidence type="ECO:0000305" key="3"/>
<feature type="peptide" id="PRO_0000043821" description="Palustrin-1d">
    <location>
        <begin position="1"/>
        <end position="27"/>
    </location>
</feature>
<feature type="disulfide bond" evidence="1">
    <location>
        <begin position="21"/>
        <end position="27"/>
    </location>
</feature>
<accession>P84277</accession>
<proteinExistence type="evidence at protein level"/>
<organism>
    <name type="scientific">Lithobates palustris</name>
    <name type="common">Pickerel frog</name>
    <name type="synonym">Rana palustris</name>
    <dbReference type="NCBI Taxonomy" id="298395"/>
    <lineage>
        <taxon>Eukaryota</taxon>
        <taxon>Metazoa</taxon>
        <taxon>Chordata</taxon>
        <taxon>Craniata</taxon>
        <taxon>Vertebrata</taxon>
        <taxon>Euteleostomi</taxon>
        <taxon>Amphibia</taxon>
        <taxon>Batrachia</taxon>
        <taxon>Anura</taxon>
        <taxon>Neobatrachia</taxon>
        <taxon>Ranoidea</taxon>
        <taxon>Ranidae</taxon>
        <taxon>Lithobates</taxon>
    </lineage>
</organism>